<protein>
    <recommendedName>
        <fullName evidence="1">DNA-directed RNA polymerase subunit beta</fullName>
        <ecNumber evidence="1">2.7.7.6</ecNumber>
    </recommendedName>
    <alternativeName>
        <fullName evidence="1">PEP</fullName>
    </alternativeName>
    <alternativeName>
        <fullName evidence="1">Plastid-encoded RNA polymerase subunit beta</fullName>
        <shortName evidence="1">RNA polymerase subunit beta</shortName>
    </alternativeName>
</protein>
<keyword id="KW-0150">Chloroplast</keyword>
<keyword id="KW-0240">DNA-directed RNA polymerase</keyword>
<keyword id="KW-0548">Nucleotidyltransferase</keyword>
<keyword id="KW-0934">Plastid</keyword>
<keyword id="KW-0804">Transcription</keyword>
<keyword id="KW-0808">Transferase</keyword>
<accession>Q68S14</accession>
<dbReference type="EC" id="2.7.7.6" evidence="1"/>
<dbReference type="EMBL" id="AY582139">
    <property type="protein sequence ID" value="AAT98501.1"/>
    <property type="molecule type" value="Genomic_DNA"/>
</dbReference>
<dbReference type="RefSeq" id="YP_086958.1">
    <property type="nucleotide sequence ID" value="NC_006290.1"/>
</dbReference>
<dbReference type="SMR" id="Q68S14"/>
<dbReference type="GeneID" id="3021561"/>
<dbReference type="GO" id="GO:0009507">
    <property type="term" value="C:chloroplast"/>
    <property type="evidence" value="ECO:0007669"/>
    <property type="project" value="UniProtKB-SubCell"/>
</dbReference>
<dbReference type="GO" id="GO:0000428">
    <property type="term" value="C:DNA-directed RNA polymerase complex"/>
    <property type="evidence" value="ECO:0007669"/>
    <property type="project" value="UniProtKB-KW"/>
</dbReference>
<dbReference type="GO" id="GO:0005739">
    <property type="term" value="C:mitochondrion"/>
    <property type="evidence" value="ECO:0007669"/>
    <property type="project" value="GOC"/>
</dbReference>
<dbReference type="GO" id="GO:0003677">
    <property type="term" value="F:DNA binding"/>
    <property type="evidence" value="ECO:0007669"/>
    <property type="project" value="UniProtKB-UniRule"/>
</dbReference>
<dbReference type="GO" id="GO:0003899">
    <property type="term" value="F:DNA-directed RNA polymerase activity"/>
    <property type="evidence" value="ECO:0007669"/>
    <property type="project" value="UniProtKB-UniRule"/>
</dbReference>
<dbReference type="GO" id="GO:0032549">
    <property type="term" value="F:ribonucleoside binding"/>
    <property type="evidence" value="ECO:0007669"/>
    <property type="project" value="InterPro"/>
</dbReference>
<dbReference type="GO" id="GO:0006351">
    <property type="term" value="P:DNA-templated transcription"/>
    <property type="evidence" value="ECO:0007669"/>
    <property type="project" value="UniProtKB-UniRule"/>
</dbReference>
<dbReference type="CDD" id="cd00653">
    <property type="entry name" value="RNA_pol_B_RPB2"/>
    <property type="match status" value="1"/>
</dbReference>
<dbReference type="FunFam" id="3.90.1110.10:FF:000009">
    <property type="entry name" value="DNA-directed RNA polymerase subunit beta"/>
    <property type="match status" value="1"/>
</dbReference>
<dbReference type="Gene3D" id="2.40.50.100">
    <property type="match status" value="1"/>
</dbReference>
<dbReference type="Gene3D" id="2.40.50.150">
    <property type="match status" value="1"/>
</dbReference>
<dbReference type="Gene3D" id="3.90.1100.10">
    <property type="match status" value="1"/>
</dbReference>
<dbReference type="Gene3D" id="2.30.150.10">
    <property type="entry name" value="DNA-directed RNA polymerase, beta subunit, external 1 domain"/>
    <property type="match status" value="1"/>
</dbReference>
<dbReference type="Gene3D" id="2.40.270.10">
    <property type="entry name" value="DNA-directed RNA polymerase, subunit 2, domain 6"/>
    <property type="match status" value="1"/>
</dbReference>
<dbReference type="Gene3D" id="3.90.1800.10">
    <property type="entry name" value="RNA polymerase alpha subunit dimerisation domain"/>
    <property type="match status" value="1"/>
</dbReference>
<dbReference type="Gene3D" id="3.90.1110.10">
    <property type="entry name" value="RNA polymerase Rpb2, domain 2"/>
    <property type="match status" value="1"/>
</dbReference>
<dbReference type="HAMAP" id="MF_01321">
    <property type="entry name" value="RNApol_bact_RpoB"/>
    <property type="match status" value="1"/>
</dbReference>
<dbReference type="InterPro" id="IPR042107">
    <property type="entry name" value="DNA-dir_RNA_pol_bsu_ext_1_sf"/>
</dbReference>
<dbReference type="InterPro" id="IPR015712">
    <property type="entry name" value="DNA-dir_RNA_pol_su2"/>
</dbReference>
<dbReference type="InterPro" id="IPR007120">
    <property type="entry name" value="DNA-dir_RNAP_su2_dom"/>
</dbReference>
<dbReference type="InterPro" id="IPR037033">
    <property type="entry name" value="DNA-dir_RNAP_su2_hyb_sf"/>
</dbReference>
<dbReference type="InterPro" id="IPR010243">
    <property type="entry name" value="RNA_pol_bsu_bac"/>
</dbReference>
<dbReference type="InterPro" id="IPR007121">
    <property type="entry name" value="RNA_pol_bsu_CS"/>
</dbReference>
<dbReference type="InterPro" id="IPR007642">
    <property type="entry name" value="RNA_pol_Rpb2_2"/>
</dbReference>
<dbReference type="InterPro" id="IPR037034">
    <property type="entry name" value="RNA_pol_Rpb2_2_sf"/>
</dbReference>
<dbReference type="InterPro" id="IPR007645">
    <property type="entry name" value="RNA_pol_Rpb2_3"/>
</dbReference>
<dbReference type="InterPro" id="IPR007641">
    <property type="entry name" value="RNA_pol_Rpb2_7"/>
</dbReference>
<dbReference type="InterPro" id="IPR014724">
    <property type="entry name" value="RNA_pol_RPB2_OB-fold"/>
</dbReference>
<dbReference type="NCBIfam" id="NF001616">
    <property type="entry name" value="PRK00405.1"/>
    <property type="match status" value="1"/>
</dbReference>
<dbReference type="PANTHER" id="PTHR20856">
    <property type="entry name" value="DNA-DIRECTED RNA POLYMERASE I SUBUNIT 2"/>
    <property type="match status" value="1"/>
</dbReference>
<dbReference type="Pfam" id="PF04561">
    <property type="entry name" value="RNA_pol_Rpb2_2"/>
    <property type="match status" value="1"/>
</dbReference>
<dbReference type="Pfam" id="PF04565">
    <property type="entry name" value="RNA_pol_Rpb2_3"/>
    <property type="match status" value="1"/>
</dbReference>
<dbReference type="Pfam" id="PF00562">
    <property type="entry name" value="RNA_pol_Rpb2_6"/>
    <property type="match status" value="1"/>
</dbReference>
<dbReference type="Pfam" id="PF04560">
    <property type="entry name" value="RNA_pol_Rpb2_7"/>
    <property type="match status" value="1"/>
</dbReference>
<dbReference type="SUPFAM" id="SSF64484">
    <property type="entry name" value="beta and beta-prime subunits of DNA dependent RNA-polymerase"/>
    <property type="match status" value="1"/>
</dbReference>
<dbReference type="PROSITE" id="PS01166">
    <property type="entry name" value="RNA_POL_BETA"/>
    <property type="match status" value="1"/>
</dbReference>
<evidence type="ECO:0000255" key="1">
    <source>
        <dbReference type="HAMAP-Rule" id="MF_01321"/>
    </source>
</evidence>
<feature type="chain" id="PRO_0000048038" description="DNA-directed RNA polymerase subunit beta">
    <location>
        <begin position="1"/>
        <end position="1071"/>
    </location>
</feature>
<name>RPOB_PANGI</name>
<proteinExistence type="inferred from homology"/>
<organism>
    <name type="scientific">Panax ginseng</name>
    <name type="common">Korean ginseng</name>
    <dbReference type="NCBI Taxonomy" id="4054"/>
    <lineage>
        <taxon>Eukaryota</taxon>
        <taxon>Viridiplantae</taxon>
        <taxon>Streptophyta</taxon>
        <taxon>Embryophyta</taxon>
        <taxon>Tracheophyta</taxon>
        <taxon>Spermatophyta</taxon>
        <taxon>Magnoliopsida</taxon>
        <taxon>eudicotyledons</taxon>
        <taxon>Gunneridae</taxon>
        <taxon>Pentapetalae</taxon>
        <taxon>asterids</taxon>
        <taxon>campanulids</taxon>
        <taxon>Apiales</taxon>
        <taxon>Araliaceae</taxon>
        <taxon>Panax</taxon>
    </lineage>
</organism>
<reference key="1">
    <citation type="journal article" date="2004" name="DNA Res.">
        <title>Complete chloroplast genome sequence from Korea ginseng (Panax schinseng Nees) and comparative analysis of sequence evolution among 17 vascular plants.</title>
        <authorList>
            <person name="Kim K.-J."/>
            <person name="Lee H.-L."/>
        </authorList>
    </citation>
    <scope>NUCLEOTIDE SEQUENCE [LARGE SCALE GENOMIC DNA]</scope>
</reference>
<comment type="function">
    <text evidence="1">DNA-dependent RNA polymerase catalyzes the transcription of DNA into RNA using the four ribonucleoside triphosphates as substrates.</text>
</comment>
<comment type="catalytic activity">
    <reaction evidence="1">
        <text>RNA(n) + a ribonucleoside 5'-triphosphate = RNA(n+1) + diphosphate</text>
        <dbReference type="Rhea" id="RHEA:21248"/>
        <dbReference type="Rhea" id="RHEA-COMP:14527"/>
        <dbReference type="Rhea" id="RHEA-COMP:17342"/>
        <dbReference type="ChEBI" id="CHEBI:33019"/>
        <dbReference type="ChEBI" id="CHEBI:61557"/>
        <dbReference type="ChEBI" id="CHEBI:140395"/>
        <dbReference type="EC" id="2.7.7.6"/>
    </reaction>
</comment>
<comment type="subunit">
    <text evidence="1">In plastids the minimal PEP RNA polymerase catalytic core is composed of four subunits: alpha, beta, beta', and beta''. When a (nuclear-encoded) sigma factor is associated with the core the holoenzyme is formed, which can initiate transcription.</text>
</comment>
<comment type="subcellular location">
    <subcellularLocation>
        <location>Plastid</location>
        <location>Chloroplast</location>
    </subcellularLocation>
</comment>
<comment type="similarity">
    <text evidence="1">Belongs to the RNA polymerase beta chain family.</text>
</comment>
<sequence length="1071" mass="120830">MLRDGKNEGMSTIPGFNQIQFEGFCRFIDQGLTEELYKFPKIEDTDQEIEFQLFVETYQLVEPLIKERDAVYESLTYSSELYVSAGLIWKTGRDMQEQTIFFGNIPLMNSLGTSIVNGIYRIVINQVLQSPGIYYRSELDHNGISVYTGTIISDWGGRSELEIDRKARIWARVSRKQKISILVLSSAMGSNLREILENVCYPEIFLSFLTDKEKKKIGSKENAILEFYQQFACVGGDPVFSESLCKELQKKFFQQRCELGRIGRRNMNRRLNLDISQNNTFLLPRDILAAADHLIGMKFGMGTLDDMNHLKNKRIRSVADLLQDQFGLALVRLENVVRGTICGALRHKLIPTPQNLVTSTPLTTTYESFFGLHPLSQVLDRTNPLTQIVHGRKLSYLGPGGLTGRTASFRIRDIHPSHYGRICPIDTSEGINVGLIGSLAIHARIGRWGSLESPFYEISERSKGARMLYLSPGKDEYYMVAAGNSLALNQGIQEEQVVPARYRQEFLTIAWEQVHLRSIFSFQYFSIGASLIPFIEHNDANRALMSSNMQRQAVPLSRSEKCIVGTGLERQAAIDSGALAIAEHEGKIIYTDTDKILLSGNGNTLSIPLVIYQRSNKNTCMHQKPQVQRGKCIKKGQILAHGAATVGGELALGKNVLVAYMPWEGYNFEDAVLISERLVYEDIYTSFHIRKYEIKTHVTSQGPERVTNEIPHLEAHLLRNLDKNGIVMLGSWVETGDILVGKLTPQMVKESSYAPEDRLLRAILGIQVSTSKETCLKLPIGGRGRVIDVRWIQKRGGSSYNPEMIRVYISQKREIKVGDKVAGRHGNKGIISKILPRQDMPYLQDGRPVDMVFNPLGVPPRMNVGQIFECSLGLAGGLLDRHYRIAPFDERYEQEASRKLVFSELYEAGKQTANPWVFEPEYPGKSRIFDGRTGDPFEQPVIIGKPYILKLIHQVDDKIHGRSSGHYALVTQQPLRGRAKQGGQRVGEMEVWALEGFGVAHILQEMLTYKSDHIRARQEVLGTTIIGGTIPNPQDAPESFRLLVRELRSLALELNHFFVSEKNFQINRKEA</sequence>
<geneLocation type="chloroplast"/>
<gene>
    <name evidence="1" type="primary">rpoB</name>
    <name type="ORF">PSC0250</name>
</gene>